<keyword id="KW-0678">Repressor</keyword>
<keyword id="KW-0687">Ribonucleoprotein</keyword>
<keyword id="KW-0689">Ribosomal protein</keyword>
<keyword id="KW-0694">RNA-binding</keyword>
<keyword id="KW-0699">rRNA-binding</keyword>
<keyword id="KW-0810">Translation regulation</keyword>
<keyword id="KW-0820">tRNA-binding</keyword>
<sequence>MAKVSKRLKALRSSVEANKLYAIDEAIALVKKAATAKFDESVDVSFNLGVDPRKSDQVIRGSVVLPKGTGKTTRVAVFTQGANAEAAKEAGADIVGFEDLAAEIKAGNLNFDVVIASPDAMRIVGQLGTILGPRGLMPNPKVGTVTPNVAEAVKNAKAGQVQYRTDKAGIVHATIGRASFAEADLKENFDALLDAIVKAKPAAAKGQYLKKVAVSSTMGLGIRVDTSSVNN</sequence>
<comment type="function">
    <text evidence="1">Binds directly to 23S rRNA. The L1 stalk is quite mobile in the ribosome, and is involved in E site tRNA release.</text>
</comment>
<comment type="function">
    <text evidence="1">Protein L1 is also a translational repressor protein, it controls the translation of the L11 operon by binding to its mRNA.</text>
</comment>
<comment type="subunit">
    <text evidence="1">Part of the 50S ribosomal subunit.</text>
</comment>
<comment type="similarity">
    <text evidence="1">Belongs to the universal ribosomal protein uL1 family.</text>
</comment>
<dbReference type="EMBL" id="CP000381">
    <property type="protein sequence ID" value="ABX74139.1"/>
    <property type="molecule type" value="Genomic_DNA"/>
</dbReference>
<dbReference type="RefSeq" id="WP_002228868.1">
    <property type="nucleotide sequence ID" value="NC_010120.1"/>
</dbReference>
<dbReference type="SMR" id="A9M3X7"/>
<dbReference type="KEGG" id="nmn:NMCC_2016"/>
<dbReference type="HOGENOM" id="CLU_062853_0_0_4"/>
<dbReference type="Proteomes" id="UP000001177">
    <property type="component" value="Chromosome"/>
</dbReference>
<dbReference type="GO" id="GO:0022625">
    <property type="term" value="C:cytosolic large ribosomal subunit"/>
    <property type="evidence" value="ECO:0007669"/>
    <property type="project" value="TreeGrafter"/>
</dbReference>
<dbReference type="GO" id="GO:0019843">
    <property type="term" value="F:rRNA binding"/>
    <property type="evidence" value="ECO:0007669"/>
    <property type="project" value="UniProtKB-UniRule"/>
</dbReference>
<dbReference type="GO" id="GO:0003735">
    <property type="term" value="F:structural constituent of ribosome"/>
    <property type="evidence" value="ECO:0007669"/>
    <property type="project" value="InterPro"/>
</dbReference>
<dbReference type="GO" id="GO:0000049">
    <property type="term" value="F:tRNA binding"/>
    <property type="evidence" value="ECO:0007669"/>
    <property type="project" value="UniProtKB-KW"/>
</dbReference>
<dbReference type="GO" id="GO:0006417">
    <property type="term" value="P:regulation of translation"/>
    <property type="evidence" value="ECO:0007669"/>
    <property type="project" value="UniProtKB-KW"/>
</dbReference>
<dbReference type="GO" id="GO:0006412">
    <property type="term" value="P:translation"/>
    <property type="evidence" value="ECO:0007669"/>
    <property type="project" value="UniProtKB-UniRule"/>
</dbReference>
<dbReference type="CDD" id="cd00403">
    <property type="entry name" value="Ribosomal_L1"/>
    <property type="match status" value="1"/>
</dbReference>
<dbReference type="FunFam" id="3.40.50.790:FF:000001">
    <property type="entry name" value="50S ribosomal protein L1"/>
    <property type="match status" value="1"/>
</dbReference>
<dbReference type="Gene3D" id="3.30.190.20">
    <property type="match status" value="1"/>
</dbReference>
<dbReference type="Gene3D" id="3.40.50.790">
    <property type="match status" value="1"/>
</dbReference>
<dbReference type="HAMAP" id="MF_01318_B">
    <property type="entry name" value="Ribosomal_uL1_B"/>
    <property type="match status" value="1"/>
</dbReference>
<dbReference type="InterPro" id="IPR005878">
    <property type="entry name" value="Ribosom_uL1_bac-type"/>
</dbReference>
<dbReference type="InterPro" id="IPR002143">
    <property type="entry name" value="Ribosomal_uL1"/>
</dbReference>
<dbReference type="InterPro" id="IPR023674">
    <property type="entry name" value="Ribosomal_uL1-like"/>
</dbReference>
<dbReference type="InterPro" id="IPR028364">
    <property type="entry name" value="Ribosomal_uL1/biogenesis"/>
</dbReference>
<dbReference type="InterPro" id="IPR016095">
    <property type="entry name" value="Ribosomal_uL1_3-a/b-sand"/>
</dbReference>
<dbReference type="InterPro" id="IPR023673">
    <property type="entry name" value="Ribosomal_uL1_CS"/>
</dbReference>
<dbReference type="NCBIfam" id="TIGR01169">
    <property type="entry name" value="rplA_bact"/>
    <property type="match status" value="1"/>
</dbReference>
<dbReference type="PANTHER" id="PTHR36427">
    <property type="entry name" value="54S RIBOSOMAL PROTEIN L1, MITOCHONDRIAL"/>
    <property type="match status" value="1"/>
</dbReference>
<dbReference type="PANTHER" id="PTHR36427:SF3">
    <property type="entry name" value="LARGE RIBOSOMAL SUBUNIT PROTEIN UL1M"/>
    <property type="match status" value="1"/>
</dbReference>
<dbReference type="Pfam" id="PF00687">
    <property type="entry name" value="Ribosomal_L1"/>
    <property type="match status" value="1"/>
</dbReference>
<dbReference type="PIRSF" id="PIRSF002155">
    <property type="entry name" value="Ribosomal_L1"/>
    <property type="match status" value="1"/>
</dbReference>
<dbReference type="SUPFAM" id="SSF56808">
    <property type="entry name" value="Ribosomal protein L1"/>
    <property type="match status" value="1"/>
</dbReference>
<dbReference type="PROSITE" id="PS01199">
    <property type="entry name" value="RIBOSOMAL_L1"/>
    <property type="match status" value="1"/>
</dbReference>
<evidence type="ECO:0000255" key="1">
    <source>
        <dbReference type="HAMAP-Rule" id="MF_01318"/>
    </source>
</evidence>
<evidence type="ECO:0000305" key="2"/>
<proteinExistence type="inferred from homology"/>
<gene>
    <name evidence="1" type="primary">rplA</name>
    <name type="ordered locus">NMCC_2016</name>
</gene>
<organism>
    <name type="scientific">Neisseria meningitidis serogroup C (strain 053442)</name>
    <dbReference type="NCBI Taxonomy" id="374833"/>
    <lineage>
        <taxon>Bacteria</taxon>
        <taxon>Pseudomonadati</taxon>
        <taxon>Pseudomonadota</taxon>
        <taxon>Betaproteobacteria</taxon>
        <taxon>Neisseriales</taxon>
        <taxon>Neisseriaceae</taxon>
        <taxon>Neisseria</taxon>
    </lineage>
</organism>
<protein>
    <recommendedName>
        <fullName evidence="1">Large ribosomal subunit protein uL1</fullName>
    </recommendedName>
    <alternativeName>
        <fullName evidence="2">50S ribosomal protein L1</fullName>
    </alternativeName>
</protein>
<name>RL1_NEIM0</name>
<accession>A9M3X7</accession>
<reference key="1">
    <citation type="journal article" date="2008" name="Genomics">
        <title>Characterization of ST-4821 complex, a unique Neisseria meningitidis clone.</title>
        <authorList>
            <person name="Peng J."/>
            <person name="Yang L."/>
            <person name="Yang F."/>
            <person name="Yang J."/>
            <person name="Yan Y."/>
            <person name="Nie H."/>
            <person name="Zhang X."/>
            <person name="Xiong Z."/>
            <person name="Jiang Y."/>
            <person name="Cheng F."/>
            <person name="Xu X."/>
            <person name="Chen S."/>
            <person name="Sun L."/>
            <person name="Li W."/>
            <person name="Shen Y."/>
            <person name="Shao Z."/>
            <person name="Liang X."/>
            <person name="Xu J."/>
            <person name="Jin Q."/>
        </authorList>
    </citation>
    <scope>NUCLEOTIDE SEQUENCE [LARGE SCALE GENOMIC DNA]</scope>
    <source>
        <strain>053442</strain>
    </source>
</reference>
<feature type="chain" id="PRO_1000086294" description="Large ribosomal subunit protein uL1">
    <location>
        <begin position="1"/>
        <end position="231"/>
    </location>
</feature>